<feature type="chain" id="PRO_1000056204" description="Bifunctional protein GlmU">
    <location>
        <begin position="1"/>
        <end position="459"/>
    </location>
</feature>
<feature type="region of interest" description="Pyrophosphorylase" evidence="1">
    <location>
        <begin position="1"/>
        <end position="229"/>
    </location>
</feature>
<feature type="region of interest" description="Linker" evidence="1">
    <location>
        <begin position="230"/>
        <end position="250"/>
    </location>
</feature>
<feature type="region of interest" description="N-acetyltransferase" evidence="1">
    <location>
        <begin position="251"/>
        <end position="459"/>
    </location>
</feature>
<feature type="active site" description="Proton acceptor" evidence="1">
    <location>
        <position position="362"/>
    </location>
</feature>
<feature type="binding site" evidence="1">
    <location>
        <begin position="8"/>
        <end position="11"/>
    </location>
    <ligand>
        <name>UDP-N-acetyl-alpha-D-glucosamine</name>
        <dbReference type="ChEBI" id="CHEBI:57705"/>
    </ligand>
</feature>
<feature type="binding site" evidence="1">
    <location>
        <position position="22"/>
    </location>
    <ligand>
        <name>UDP-N-acetyl-alpha-D-glucosamine</name>
        <dbReference type="ChEBI" id="CHEBI:57705"/>
    </ligand>
</feature>
<feature type="binding site" evidence="1">
    <location>
        <position position="72"/>
    </location>
    <ligand>
        <name>UDP-N-acetyl-alpha-D-glucosamine</name>
        <dbReference type="ChEBI" id="CHEBI:57705"/>
    </ligand>
</feature>
<feature type="binding site" evidence="1">
    <location>
        <begin position="77"/>
        <end position="78"/>
    </location>
    <ligand>
        <name>UDP-N-acetyl-alpha-D-glucosamine</name>
        <dbReference type="ChEBI" id="CHEBI:57705"/>
    </ligand>
</feature>
<feature type="binding site" evidence="1">
    <location>
        <position position="102"/>
    </location>
    <ligand>
        <name>Mg(2+)</name>
        <dbReference type="ChEBI" id="CHEBI:18420"/>
    </ligand>
</feature>
<feature type="binding site" evidence="1">
    <location>
        <position position="139"/>
    </location>
    <ligand>
        <name>UDP-N-acetyl-alpha-D-glucosamine</name>
        <dbReference type="ChEBI" id="CHEBI:57705"/>
    </ligand>
</feature>
<feature type="binding site" evidence="1">
    <location>
        <position position="154"/>
    </location>
    <ligand>
        <name>UDP-N-acetyl-alpha-D-glucosamine</name>
        <dbReference type="ChEBI" id="CHEBI:57705"/>
    </ligand>
</feature>
<feature type="binding site" evidence="1">
    <location>
        <position position="169"/>
    </location>
    <ligand>
        <name>UDP-N-acetyl-alpha-D-glucosamine</name>
        <dbReference type="ChEBI" id="CHEBI:57705"/>
    </ligand>
</feature>
<feature type="binding site" evidence="1">
    <location>
        <position position="227"/>
    </location>
    <ligand>
        <name>Mg(2+)</name>
        <dbReference type="ChEBI" id="CHEBI:18420"/>
    </ligand>
</feature>
<feature type="binding site" evidence="1">
    <location>
        <position position="227"/>
    </location>
    <ligand>
        <name>UDP-N-acetyl-alpha-D-glucosamine</name>
        <dbReference type="ChEBI" id="CHEBI:57705"/>
    </ligand>
</feature>
<feature type="binding site" evidence="1">
    <location>
        <position position="332"/>
    </location>
    <ligand>
        <name>UDP-N-acetyl-alpha-D-glucosamine</name>
        <dbReference type="ChEBI" id="CHEBI:57705"/>
    </ligand>
</feature>
<feature type="binding site" evidence="1">
    <location>
        <position position="350"/>
    </location>
    <ligand>
        <name>UDP-N-acetyl-alpha-D-glucosamine</name>
        <dbReference type="ChEBI" id="CHEBI:57705"/>
    </ligand>
</feature>
<feature type="binding site" evidence="1">
    <location>
        <position position="365"/>
    </location>
    <ligand>
        <name>UDP-N-acetyl-alpha-D-glucosamine</name>
        <dbReference type="ChEBI" id="CHEBI:57705"/>
    </ligand>
</feature>
<feature type="binding site" evidence="1">
    <location>
        <position position="376"/>
    </location>
    <ligand>
        <name>UDP-N-acetyl-alpha-D-glucosamine</name>
        <dbReference type="ChEBI" id="CHEBI:57705"/>
    </ligand>
</feature>
<feature type="binding site" evidence="1">
    <location>
        <position position="379"/>
    </location>
    <ligand>
        <name>acetyl-CoA</name>
        <dbReference type="ChEBI" id="CHEBI:57288"/>
    </ligand>
</feature>
<feature type="binding site" evidence="1">
    <location>
        <begin position="385"/>
        <end position="386"/>
    </location>
    <ligand>
        <name>acetyl-CoA</name>
        <dbReference type="ChEBI" id="CHEBI:57288"/>
    </ligand>
</feature>
<feature type="binding site" evidence="1">
    <location>
        <position position="404"/>
    </location>
    <ligand>
        <name>acetyl-CoA</name>
        <dbReference type="ChEBI" id="CHEBI:57288"/>
    </ligand>
</feature>
<feature type="binding site" evidence="1">
    <location>
        <position position="422"/>
    </location>
    <ligand>
        <name>acetyl-CoA</name>
        <dbReference type="ChEBI" id="CHEBI:57288"/>
    </ligand>
</feature>
<feature type="binding site" evidence="1">
    <location>
        <position position="439"/>
    </location>
    <ligand>
        <name>acetyl-CoA</name>
        <dbReference type="ChEBI" id="CHEBI:57288"/>
    </ligand>
</feature>
<feature type="strand" evidence="2">
    <location>
        <begin position="3"/>
        <end position="9"/>
    </location>
</feature>
<feature type="helix" evidence="2">
    <location>
        <begin position="14"/>
        <end position="16"/>
    </location>
</feature>
<feature type="helix" evidence="2">
    <location>
        <begin position="22"/>
        <end position="24"/>
    </location>
</feature>
<feature type="strand" evidence="2">
    <location>
        <begin position="25"/>
        <end position="27"/>
    </location>
</feature>
<feature type="helix" evidence="2">
    <location>
        <begin position="32"/>
        <end position="41"/>
    </location>
</feature>
<feature type="strand" evidence="2">
    <location>
        <begin position="46"/>
        <end position="52"/>
    </location>
</feature>
<feature type="helix" evidence="2">
    <location>
        <begin position="56"/>
        <end position="60"/>
    </location>
</feature>
<feature type="strand" evidence="2">
    <location>
        <begin position="68"/>
        <end position="71"/>
    </location>
</feature>
<feature type="helix" evidence="2">
    <location>
        <begin position="77"/>
        <end position="83"/>
    </location>
</feature>
<feature type="helix" evidence="2">
    <location>
        <begin position="86"/>
        <end position="89"/>
    </location>
</feature>
<feature type="strand" evidence="2">
    <location>
        <begin position="94"/>
        <end position="100"/>
    </location>
</feature>
<feature type="helix" evidence="2">
    <location>
        <begin position="108"/>
        <end position="120"/>
    </location>
</feature>
<feature type="strand" evidence="2">
    <location>
        <begin position="124"/>
        <end position="131"/>
    </location>
</feature>
<feature type="strand" evidence="2">
    <location>
        <begin position="140"/>
        <end position="143"/>
    </location>
</feature>
<feature type="strand" evidence="2">
    <location>
        <begin position="149"/>
        <end position="153"/>
    </location>
</feature>
<feature type="turn" evidence="2">
    <location>
        <begin position="155"/>
        <end position="157"/>
    </location>
</feature>
<feature type="helix" evidence="2">
    <location>
        <begin position="160"/>
        <end position="163"/>
    </location>
</feature>
<feature type="strand" evidence="2">
    <location>
        <begin position="167"/>
        <end position="176"/>
    </location>
</feature>
<feature type="helix" evidence="2">
    <location>
        <begin position="177"/>
        <end position="190"/>
    </location>
</feature>
<feature type="strand" evidence="2">
    <location>
        <begin position="192"/>
        <end position="194"/>
    </location>
</feature>
<feature type="helix" evidence="2">
    <location>
        <begin position="199"/>
        <end position="208"/>
    </location>
</feature>
<feature type="strand" evidence="2">
    <location>
        <begin position="212"/>
        <end position="218"/>
    </location>
</feature>
<feature type="helix" evidence="2">
    <location>
        <begin position="220"/>
        <end position="223"/>
    </location>
</feature>
<feature type="helix" evidence="2">
    <location>
        <begin position="229"/>
        <end position="249"/>
    </location>
</feature>
<feature type="strand" evidence="2">
    <location>
        <begin position="253"/>
        <end position="255"/>
    </location>
</feature>
<feature type="helix" evidence="2">
    <location>
        <begin position="257"/>
        <end position="259"/>
    </location>
</feature>
<feature type="strand" evidence="2">
    <location>
        <begin position="279"/>
        <end position="283"/>
    </location>
</feature>
<feature type="strand" evidence="2">
    <location>
        <begin position="297"/>
        <end position="300"/>
    </location>
</feature>
<feature type="strand" evidence="2">
    <location>
        <begin position="313"/>
        <end position="316"/>
    </location>
</feature>
<feature type="strand" evidence="2">
    <location>
        <begin position="342"/>
        <end position="351"/>
    </location>
</feature>
<feature type="strand" evidence="2">
    <location>
        <begin position="359"/>
        <end position="371"/>
    </location>
</feature>
<feature type="strand" evidence="2">
    <location>
        <begin position="382"/>
        <end position="384"/>
    </location>
</feature>
<feature type="strand" evidence="2">
    <location>
        <begin position="386"/>
        <end position="389"/>
    </location>
</feature>
<feature type="strand" evidence="2">
    <location>
        <begin position="394"/>
        <end position="396"/>
    </location>
</feature>
<feature type="strand" evidence="2">
    <location>
        <begin position="407"/>
        <end position="411"/>
    </location>
</feature>
<feature type="helix" evidence="2">
    <location>
        <begin position="448"/>
        <end position="451"/>
    </location>
</feature>
<feature type="helix" evidence="2">
    <location>
        <begin position="456"/>
        <end position="458"/>
    </location>
</feature>
<dbReference type="EC" id="2.7.7.23" evidence="1"/>
<dbReference type="EC" id="2.3.1.157" evidence="1"/>
<dbReference type="EMBL" id="CP000410">
    <property type="protein sequence ID" value="ABJ54468.1"/>
    <property type="molecule type" value="Genomic_DNA"/>
</dbReference>
<dbReference type="RefSeq" id="WP_000064394.1">
    <property type="nucleotide sequence ID" value="NZ_JAMLJR010000004.1"/>
</dbReference>
<dbReference type="PDB" id="7KR9">
    <property type="method" value="X-ray"/>
    <property type="resolution" value="1.90 A"/>
    <property type="chains" value="A=1-459"/>
</dbReference>
<dbReference type="PDBsum" id="7KR9"/>
<dbReference type="SMR" id="Q04KU2"/>
<dbReference type="PaxDb" id="373153-SPD_0874"/>
<dbReference type="KEGG" id="spd:SPD_0874"/>
<dbReference type="eggNOG" id="COG1207">
    <property type="taxonomic scope" value="Bacteria"/>
</dbReference>
<dbReference type="HOGENOM" id="CLU_029499_15_2_9"/>
<dbReference type="BioCyc" id="SPNE373153:G1G6V-960-MONOMER"/>
<dbReference type="UniPathway" id="UPA00113">
    <property type="reaction ID" value="UER00532"/>
</dbReference>
<dbReference type="UniPathway" id="UPA00113">
    <property type="reaction ID" value="UER00533"/>
</dbReference>
<dbReference type="UniPathway" id="UPA00973"/>
<dbReference type="Proteomes" id="UP000001452">
    <property type="component" value="Chromosome"/>
</dbReference>
<dbReference type="GO" id="GO:0005737">
    <property type="term" value="C:cytoplasm"/>
    <property type="evidence" value="ECO:0007669"/>
    <property type="project" value="UniProtKB-SubCell"/>
</dbReference>
<dbReference type="GO" id="GO:0016020">
    <property type="term" value="C:membrane"/>
    <property type="evidence" value="ECO:0007669"/>
    <property type="project" value="GOC"/>
</dbReference>
<dbReference type="GO" id="GO:0019134">
    <property type="term" value="F:glucosamine-1-phosphate N-acetyltransferase activity"/>
    <property type="evidence" value="ECO:0007669"/>
    <property type="project" value="UniProtKB-UniRule"/>
</dbReference>
<dbReference type="GO" id="GO:0000287">
    <property type="term" value="F:magnesium ion binding"/>
    <property type="evidence" value="ECO:0007669"/>
    <property type="project" value="UniProtKB-UniRule"/>
</dbReference>
<dbReference type="GO" id="GO:0003977">
    <property type="term" value="F:UDP-N-acetylglucosamine diphosphorylase activity"/>
    <property type="evidence" value="ECO:0007669"/>
    <property type="project" value="UniProtKB-UniRule"/>
</dbReference>
<dbReference type="GO" id="GO:0000902">
    <property type="term" value="P:cell morphogenesis"/>
    <property type="evidence" value="ECO:0007669"/>
    <property type="project" value="UniProtKB-UniRule"/>
</dbReference>
<dbReference type="GO" id="GO:0071555">
    <property type="term" value="P:cell wall organization"/>
    <property type="evidence" value="ECO:0007669"/>
    <property type="project" value="UniProtKB-KW"/>
</dbReference>
<dbReference type="GO" id="GO:0009245">
    <property type="term" value="P:lipid A biosynthetic process"/>
    <property type="evidence" value="ECO:0007669"/>
    <property type="project" value="UniProtKB-UniRule"/>
</dbReference>
<dbReference type="GO" id="GO:0009252">
    <property type="term" value="P:peptidoglycan biosynthetic process"/>
    <property type="evidence" value="ECO:0007669"/>
    <property type="project" value="UniProtKB-UniRule"/>
</dbReference>
<dbReference type="GO" id="GO:0008360">
    <property type="term" value="P:regulation of cell shape"/>
    <property type="evidence" value="ECO:0007669"/>
    <property type="project" value="UniProtKB-KW"/>
</dbReference>
<dbReference type="GO" id="GO:0006048">
    <property type="term" value="P:UDP-N-acetylglucosamine biosynthetic process"/>
    <property type="evidence" value="ECO:0007669"/>
    <property type="project" value="UniProtKB-UniPathway"/>
</dbReference>
<dbReference type="CDD" id="cd02540">
    <property type="entry name" value="GT2_GlmU_N_bac"/>
    <property type="match status" value="1"/>
</dbReference>
<dbReference type="CDD" id="cd03353">
    <property type="entry name" value="LbH_GlmU_C"/>
    <property type="match status" value="1"/>
</dbReference>
<dbReference type="Gene3D" id="2.160.10.10">
    <property type="entry name" value="Hexapeptide repeat proteins"/>
    <property type="match status" value="1"/>
</dbReference>
<dbReference type="Gene3D" id="3.90.550.10">
    <property type="entry name" value="Spore Coat Polysaccharide Biosynthesis Protein SpsA, Chain A"/>
    <property type="match status" value="1"/>
</dbReference>
<dbReference type="HAMAP" id="MF_01631">
    <property type="entry name" value="GlmU"/>
    <property type="match status" value="1"/>
</dbReference>
<dbReference type="InterPro" id="IPR005882">
    <property type="entry name" value="Bifunctional_GlmU"/>
</dbReference>
<dbReference type="InterPro" id="IPR050065">
    <property type="entry name" value="GlmU-like"/>
</dbReference>
<dbReference type="InterPro" id="IPR038009">
    <property type="entry name" value="GlmU_C_LbH"/>
</dbReference>
<dbReference type="InterPro" id="IPR001451">
    <property type="entry name" value="Hexapep"/>
</dbReference>
<dbReference type="InterPro" id="IPR018357">
    <property type="entry name" value="Hexapep_transf_CS"/>
</dbReference>
<dbReference type="InterPro" id="IPR005835">
    <property type="entry name" value="NTP_transferase_dom"/>
</dbReference>
<dbReference type="InterPro" id="IPR029044">
    <property type="entry name" value="Nucleotide-diphossugar_trans"/>
</dbReference>
<dbReference type="InterPro" id="IPR011004">
    <property type="entry name" value="Trimer_LpxA-like_sf"/>
</dbReference>
<dbReference type="NCBIfam" id="TIGR01173">
    <property type="entry name" value="glmU"/>
    <property type="match status" value="1"/>
</dbReference>
<dbReference type="NCBIfam" id="NF010934">
    <property type="entry name" value="PRK14354.1"/>
    <property type="match status" value="1"/>
</dbReference>
<dbReference type="PANTHER" id="PTHR43584:SF3">
    <property type="entry name" value="BIFUNCTIONAL PROTEIN GLMU"/>
    <property type="match status" value="1"/>
</dbReference>
<dbReference type="PANTHER" id="PTHR43584">
    <property type="entry name" value="NUCLEOTIDYL TRANSFERASE"/>
    <property type="match status" value="1"/>
</dbReference>
<dbReference type="Pfam" id="PF14602">
    <property type="entry name" value="Hexapep_2"/>
    <property type="match status" value="1"/>
</dbReference>
<dbReference type="Pfam" id="PF00483">
    <property type="entry name" value="NTP_transferase"/>
    <property type="match status" value="1"/>
</dbReference>
<dbReference type="SUPFAM" id="SSF53448">
    <property type="entry name" value="Nucleotide-diphospho-sugar transferases"/>
    <property type="match status" value="1"/>
</dbReference>
<dbReference type="SUPFAM" id="SSF51161">
    <property type="entry name" value="Trimeric LpxA-like enzymes"/>
    <property type="match status" value="1"/>
</dbReference>
<dbReference type="PROSITE" id="PS00101">
    <property type="entry name" value="HEXAPEP_TRANSFERASES"/>
    <property type="match status" value="1"/>
</dbReference>
<comment type="function">
    <text evidence="1">Catalyzes the last two sequential reactions in the de novo biosynthetic pathway for UDP-N-acetylglucosamine (UDP-GlcNAc). The C-terminal domain catalyzes the transfer of acetyl group from acetyl coenzyme A to glucosamine-1-phosphate (GlcN-1-P) to produce N-acetylglucosamine-1-phosphate (GlcNAc-1-P), which is converted into UDP-GlcNAc by the transfer of uridine 5-monophosphate (from uridine 5-triphosphate), a reaction catalyzed by the N-terminal domain.</text>
</comment>
<comment type="catalytic activity">
    <reaction evidence="1">
        <text>alpha-D-glucosamine 1-phosphate + acetyl-CoA = N-acetyl-alpha-D-glucosamine 1-phosphate + CoA + H(+)</text>
        <dbReference type="Rhea" id="RHEA:13725"/>
        <dbReference type="ChEBI" id="CHEBI:15378"/>
        <dbReference type="ChEBI" id="CHEBI:57287"/>
        <dbReference type="ChEBI" id="CHEBI:57288"/>
        <dbReference type="ChEBI" id="CHEBI:57776"/>
        <dbReference type="ChEBI" id="CHEBI:58516"/>
        <dbReference type="EC" id="2.3.1.157"/>
    </reaction>
</comment>
<comment type="catalytic activity">
    <reaction evidence="1">
        <text>N-acetyl-alpha-D-glucosamine 1-phosphate + UTP + H(+) = UDP-N-acetyl-alpha-D-glucosamine + diphosphate</text>
        <dbReference type="Rhea" id="RHEA:13509"/>
        <dbReference type="ChEBI" id="CHEBI:15378"/>
        <dbReference type="ChEBI" id="CHEBI:33019"/>
        <dbReference type="ChEBI" id="CHEBI:46398"/>
        <dbReference type="ChEBI" id="CHEBI:57705"/>
        <dbReference type="ChEBI" id="CHEBI:57776"/>
        <dbReference type="EC" id="2.7.7.23"/>
    </reaction>
</comment>
<comment type="cofactor">
    <cofactor evidence="1">
        <name>Mg(2+)</name>
        <dbReference type="ChEBI" id="CHEBI:18420"/>
    </cofactor>
    <text evidence="1">Binds 1 Mg(2+) ion per subunit.</text>
</comment>
<comment type="pathway">
    <text evidence="1">Nucleotide-sugar biosynthesis; UDP-N-acetyl-alpha-D-glucosamine biosynthesis; N-acetyl-alpha-D-glucosamine 1-phosphate from alpha-D-glucosamine 6-phosphate (route II): step 2/2.</text>
</comment>
<comment type="pathway">
    <text evidence="1">Nucleotide-sugar biosynthesis; UDP-N-acetyl-alpha-D-glucosamine biosynthesis; UDP-N-acetyl-alpha-D-glucosamine from N-acetyl-alpha-D-glucosamine 1-phosphate: step 1/1.</text>
</comment>
<comment type="pathway">
    <text evidence="1">Bacterial outer membrane biogenesis; LPS lipid A biosynthesis.</text>
</comment>
<comment type="subunit">
    <text evidence="1">Homotrimer.</text>
</comment>
<comment type="subcellular location">
    <subcellularLocation>
        <location evidence="1">Cytoplasm</location>
    </subcellularLocation>
</comment>
<comment type="similarity">
    <text evidence="1">In the N-terminal section; belongs to the N-acetylglucosamine-1-phosphate uridyltransferase family.</text>
</comment>
<comment type="similarity">
    <text evidence="1">In the C-terminal section; belongs to the transferase hexapeptide repeat family.</text>
</comment>
<organism>
    <name type="scientific">Streptococcus pneumoniae serotype 2 (strain D39 / NCTC 7466)</name>
    <dbReference type="NCBI Taxonomy" id="373153"/>
    <lineage>
        <taxon>Bacteria</taxon>
        <taxon>Bacillati</taxon>
        <taxon>Bacillota</taxon>
        <taxon>Bacilli</taxon>
        <taxon>Lactobacillales</taxon>
        <taxon>Streptococcaceae</taxon>
        <taxon>Streptococcus</taxon>
    </lineage>
</organism>
<protein>
    <recommendedName>
        <fullName evidence="1">Bifunctional protein GlmU</fullName>
    </recommendedName>
    <domain>
        <recommendedName>
            <fullName evidence="1">UDP-N-acetylglucosamine pyrophosphorylase</fullName>
            <ecNumber evidence="1">2.7.7.23</ecNumber>
        </recommendedName>
        <alternativeName>
            <fullName evidence="1">N-acetylglucosamine-1-phosphate uridyltransferase</fullName>
        </alternativeName>
    </domain>
    <domain>
        <recommendedName>
            <fullName evidence="1">Glucosamine-1-phosphate N-acetyltransferase</fullName>
            <ecNumber evidence="1">2.3.1.157</ecNumber>
        </recommendedName>
    </domain>
</protein>
<accession>Q04KU2</accession>
<name>GLMU_STRP2</name>
<reference key="1">
    <citation type="journal article" date="2007" name="J. Bacteriol.">
        <title>Genome sequence of Avery's virulent serotype 2 strain D39 of Streptococcus pneumoniae and comparison with that of unencapsulated laboratory strain R6.</title>
        <authorList>
            <person name="Lanie J.A."/>
            <person name="Ng W.-L."/>
            <person name="Kazmierczak K.M."/>
            <person name="Andrzejewski T.M."/>
            <person name="Davidsen T.M."/>
            <person name="Wayne K.J."/>
            <person name="Tettelin H."/>
            <person name="Glass J.I."/>
            <person name="Winkler M.E."/>
        </authorList>
    </citation>
    <scope>NUCLEOTIDE SEQUENCE [LARGE SCALE GENOMIC DNA]</scope>
    <source>
        <strain>D39 / NCTC 7466</strain>
    </source>
</reference>
<gene>
    <name evidence="1" type="primary">glmU</name>
    <name type="ordered locus">SPD_0874</name>
</gene>
<proteinExistence type="evidence at protein level"/>
<sequence length="459" mass="49428">MSNFAIILAAGKGTRMKSDLPKVLHKVAGISMLEHVFRSVGAIQPEKTVTVVGHKAELVEEVLAEQTEFVTQSEQLGTGHAVMMTEPILEGLSGHTLVIAGDTPLITGESLKNLIDFHINHKNVATILTAETDNPFGYGRIVRNDNAEVLRIVEQKDATDFEKQIKEINTGTYVFDNERLFEALKNINTNNAQGEYYITDVIGIFRETGEKVGAYTLKDFDESLGVNDRVALATAESVMRRRINHKHMVNGVSFVNPEATYIDIDVEIAPEVQIEANVILKGQTKIGAETVLTNGTYVVDSTIGAGAVITNSMIEESSVADGVTVGPYAHIRPNSSLGAQVHIGNFVEVKGSSIGENTKAGHLTYIGNCEVGSNVNFGAGTITVNYDGKNKYKTVIGDNVFVGSNSTIIAPVELGDNSLVGAGSTITKDVPADAIAIGRGRQINKDEYATRLPHHPKNQ</sequence>
<evidence type="ECO:0000255" key="1">
    <source>
        <dbReference type="HAMAP-Rule" id="MF_01631"/>
    </source>
</evidence>
<evidence type="ECO:0007829" key="2">
    <source>
        <dbReference type="PDB" id="7KR9"/>
    </source>
</evidence>
<keyword id="KW-0002">3D-structure</keyword>
<keyword id="KW-0012">Acyltransferase</keyword>
<keyword id="KW-0133">Cell shape</keyword>
<keyword id="KW-0961">Cell wall biogenesis/degradation</keyword>
<keyword id="KW-0963">Cytoplasm</keyword>
<keyword id="KW-0460">Magnesium</keyword>
<keyword id="KW-0479">Metal-binding</keyword>
<keyword id="KW-0511">Multifunctional enzyme</keyword>
<keyword id="KW-0548">Nucleotidyltransferase</keyword>
<keyword id="KW-0573">Peptidoglycan synthesis</keyword>
<keyword id="KW-1185">Reference proteome</keyword>
<keyword id="KW-0677">Repeat</keyword>
<keyword id="KW-0808">Transferase</keyword>